<keyword id="KW-0963">Cytoplasm</keyword>
<keyword id="KW-0275">Fatty acid biosynthesis</keyword>
<keyword id="KW-0276">Fatty acid metabolism</keyword>
<keyword id="KW-0444">Lipid biosynthesis</keyword>
<keyword id="KW-0443">Lipid metabolism</keyword>
<keyword id="KW-0460">Magnesium</keyword>
<keyword id="KW-0479">Metal-binding</keyword>
<keyword id="KW-0808">Transferase</keyword>
<name>ACPS_ROSS1</name>
<evidence type="ECO:0000255" key="1">
    <source>
        <dbReference type="HAMAP-Rule" id="MF_00101"/>
    </source>
</evidence>
<dbReference type="EC" id="2.7.8.7" evidence="1"/>
<dbReference type="EMBL" id="CP000686">
    <property type="protein sequence ID" value="ABQ89454.1"/>
    <property type="molecule type" value="Genomic_DNA"/>
</dbReference>
<dbReference type="RefSeq" id="WP_011955807.1">
    <property type="nucleotide sequence ID" value="NC_009523.1"/>
</dbReference>
<dbReference type="SMR" id="A5US51"/>
<dbReference type="STRING" id="357808.RoseRS_1045"/>
<dbReference type="KEGG" id="rrs:RoseRS_1045"/>
<dbReference type="eggNOG" id="COG0736">
    <property type="taxonomic scope" value="Bacteria"/>
</dbReference>
<dbReference type="HOGENOM" id="CLU_089696_2_1_0"/>
<dbReference type="OrthoDB" id="517356at2"/>
<dbReference type="Proteomes" id="UP000006554">
    <property type="component" value="Chromosome"/>
</dbReference>
<dbReference type="GO" id="GO:0005737">
    <property type="term" value="C:cytoplasm"/>
    <property type="evidence" value="ECO:0007669"/>
    <property type="project" value="UniProtKB-SubCell"/>
</dbReference>
<dbReference type="GO" id="GO:0008897">
    <property type="term" value="F:holo-[acyl-carrier-protein] synthase activity"/>
    <property type="evidence" value="ECO:0007669"/>
    <property type="project" value="UniProtKB-UniRule"/>
</dbReference>
<dbReference type="GO" id="GO:0000287">
    <property type="term" value="F:magnesium ion binding"/>
    <property type="evidence" value="ECO:0007669"/>
    <property type="project" value="UniProtKB-UniRule"/>
</dbReference>
<dbReference type="GO" id="GO:0006633">
    <property type="term" value="P:fatty acid biosynthetic process"/>
    <property type="evidence" value="ECO:0007669"/>
    <property type="project" value="UniProtKB-UniRule"/>
</dbReference>
<dbReference type="Gene3D" id="3.90.470.20">
    <property type="entry name" value="4'-phosphopantetheinyl transferase domain"/>
    <property type="match status" value="1"/>
</dbReference>
<dbReference type="HAMAP" id="MF_00101">
    <property type="entry name" value="AcpS"/>
    <property type="match status" value="1"/>
</dbReference>
<dbReference type="InterPro" id="IPR008278">
    <property type="entry name" value="4-PPantetheinyl_Trfase_dom"/>
</dbReference>
<dbReference type="InterPro" id="IPR037143">
    <property type="entry name" value="4-PPantetheinyl_Trfase_dom_sf"/>
</dbReference>
<dbReference type="InterPro" id="IPR002582">
    <property type="entry name" value="ACPS"/>
</dbReference>
<dbReference type="InterPro" id="IPR004568">
    <property type="entry name" value="Ppantetheine-prot_Trfase_dom"/>
</dbReference>
<dbReference type="NCBIfam" id="TIGR00516">
    <property type="entry name" value="acpS"/>
    <property type="match status" value="1"/>
</dbReference>
<dbReference type="NCBIfam" id="TIGR00556">
    <property type="entry name" value="pantethn_trn"/>
    <property type="match status" value="1"/>
</dbReference>
<dbReference type="Pfam" id="PF01648">
    <property type="entry name" value="ACPS"/>
    <property type="match status" value="1"/>
</dbReference>
<dbReference type="SUPFAM" id="SSF56214">
    <property type="entry name" value="4'-phosphopantetheinyl transferase"/>
    <property type="match status" value="1"/>
</dbReference>
<feature type="chain" id="PRO_1000202804" description="Holo-[acyl-carrier-protein] synthase">
    <location>
        <begin position="1"/>
        <end position="138"/>
    </location>
</feature>
<feature type="binding site" evidence="1">
    <location>
        <position position="8"/>
    </location>
    <ligand>
        <name>Mg(2+)</name>
        <dbReference type="ChEBI" id="CHEBI:18420"/>
    </ligand>
</feature>
<feature type="binding site" evidence="1">
    <location>
        <position position="54"/>
    </location>
    <ligand>
        <name>Mg(2+)</name>
        <dbReference type="ChEBI" id="CHEBI:18420"/>
    </ligand>
</feature>
<protein>
    <recommendedName>
        <fullName evidence="1">Holo-[acyl-carrier-protein] synthase</fullName>
        <shortName evidence="1">Holo-ACP synthase</shortName>
        <ecNumber evidence="1">2.7.8.7</ecNumber>
    </recommendedName>
    <alternativeName>
        <fullName evidence="1">4'-phosphopantetheinyl transferase AcpS</fullName>
    </alternativeName>
</protein>
<gene>
    <name evidence="1" type="primary">acpS</name>
    <name type="ordered locus">RoseRS_1045</name>
</gene>
<sequence>MTVYTGIDIVEIARIKRAVERWGDRFVQRIYSPAEIALCAGRINSLAARWAAKEAVAKLLGVGMRGPGSSAHSVAFRDIETLTDDDGRPTVTLSGAARARARELHIESICISLSHDHGLAIAVAVASTSPAARRRMPW</sequence>
<accession>A5US51</accession>
<organism>
    <name type="scientific">Roseiflexus sp. (strain RS-1)</name>
    <dbReference type="NCBI Taxonomy" id="357808"/>
    <lineage>
        <taxon>Bacteria</taxon>
        <taxon>Bacillati</taxon>
        <taxon>Chloroflexota</taxon>
        <taxon>Chloroflexia</taxon>
        <taxon>Chloroflexales</taxon>
        <taxon>Roseiflexineae</taxon>
        <taxon>Roseiflexaceae</taxon>
        <taxon>Roseiflexus</taxon>
    </lineage>
</organism>
<comment type="function">
    <text evidence="1">Transfers the 4'-phosphopantetheine moiety from coenzyme A to a Ser of acyl-carrier-protein.</text>
</comment>
<comment type="catalytic activity">
    <reaction evidence="1">
        <text>apo-[ACP] + CoA = holo-[ACP] + adenosine 3',5'-bisphosphate + H(+)</text>
        <dbReference type="Rhea" id="RHEA:12068"/>
        <dbReference type="Rhea" id="RHEA-COMP:9685"/>
        <dbReference type="Rhea" id="RHEA-COMP:9690"/>
        <dbReference type="ChEBI" id="CHEBI:15378"/>
        <dbReference type="ChEBI" id="CHEBI:29999"/>
        <dbReference type="ChEBI" id="CHEBI:57287"/>
        <dbReference type="ChEBI" id="CHEBI:58343"/>
        <dbReference type="ChEBI" id="CHEBI:64479"/>
        <dbReference type="EC" id="2.7.8.7"/>
    </reaction>
</comment>
<comment type="cofactor">
    <cofactor evidence="1">
        <name>Mg(2+)</name>
        <dbReference type="ChEBI" id="CHEBI:18420"/>
    </cofactor>
</comment>
<comment type="subcellular location">
    <subcellularLocation>
        <location evidence="1">Cytoplasm</location>
    </subcellularLocation>
</comment>
<comment type="similarity">
    <text evidence="1">Belongs to the P-Pant transferase superfamily. AcpS family.</text>
</comment>
<proteinExistence type="inferred from homology"/>
<reference key="1">
    <citation type="submission" date="2007-04" db="EMBL/GenBank/DDBJ databases">
        <title>Complete sequence of Roseiflexus sp. RS-1.</title>
        <authorList>
            <consortium name="US DOE Joint Genome Institute"/>
            <person name="Copeland A."/>
            <person name="Lucas S."/>
            <person name="Lapidus A."/>
            <person name="Barry K."/>
            <person name="Detter J.C."/>
            <person name="Glavina del Rio T."/>
            <person name="Hammon N."/>
            <person name="Israni S."/>
            <person name="Dalin E."/>
            <person name="Tice H."/>
            <person name="Pitluck S."/>
            <person name="Chertkov O."/>
            <person name="Brettin T."/>
            <person name="Bruce D."/>
            <person name="Han C."/>
            <person name="Schmutz J."/>
            <person name="Larimer F."/>
            <person name="Land M."/>
            <person name="Hauser L."/>
            <person name="Kyrpides N."/>
            <person name="Mikhailova N."/>
            <person name="Bryant D.A."/>
            <person name="Richardson P."/>
        </authorList>
    </citation>
    <scope>NUCLEOTIDE SEQUENCE [LARGE SCALE GENOMIC DNA]</scope>
    <source>
        <strain>RS-1</strain>
    </source>
</reference>